<evidence type="ECO:0000250" key="1">
    <source>
        <dbReference type="UniProtKB" id="Q9UHG3"/>
    </source>
</evidence>
<evidence type="ECO:0000255" key="2"/>
<evidence type="ECO:0000255" key="3">
    <source>
        <dbReference type="PROSITE-ProRule" id="PRU00498"/>
    </source>
</evidence>
<evidence type="ECO:0000269" key="4">
    <source>
    </source>
</evidence>
<evidence type="ECO:0000303" key="5">
    <source>
    </source>
</evidence>
<evidence type="ECO:0000305" key="6"/>
<evidence type="ECO:0000312" key="7">
    <source>
        <dbReference type="Araport" id="AT5G63910"/>
    </source>
</evidence>
<evidence type="ECO:0000312" key="8">
    <source>
        <dbReference type="EMBL" id="BAB11039.1"/>
    </source>
</evidence>
<accession>P57681</accession>
<name>PCYOX_ARATH</name>
<reference key="1">
    <citation type="journal article" date="1997" name="DNA Res.">
        <title>Structural analysis of Arabidopsis thaliana chromosome 5. III. Sequence features of the regions of 1,191,918 bp covered by seventeen physically assigned P1 clones.</title>
        <authorList>
            <person name="Nakamura Y."/>
            <person name="Sato S."/>
            <person name="Kaneko T."/>
            <person name="Kotani H."/>
            <person name="Asamizu E."/>
            <person name="Miyajima N."/>
            <person name="Tabata S."/>
        </authorList>
    </citation>
    <scope>NUCLEOTIDE SEQUENCE [LARGE SCALE GENOMIC DNA]</scope>
    <source>
        <strain>cv. Columbia</strain>
    </source>
</reference>
<reference key="2">
    <citation type="journal article" date="2000" name="DNA Res.">
        <title>Structural analysis of Arabidopsis thaliana chromosome 5. X. Sequence features of the regions of 3,076,755 bp covered by sixty P1 and TAC clones.</title>
        <authorList>
            <person name="Sato S."/>
            <person name="Nakamura Y."/>
            <person name="Kaneko T."/>
            <person name="Katoh T."/>
            <person name="Asamizu E."/>
            <person name="Kotani H."/>
            <person name="Tabata S."/>
        </authorList>
    </citation>
    <scope>NUCLEOTIDE SEQUENCE [LARGE SCALE GENOMIC DNA]</scope>
    <source>
        <strain>cv. Columbia</strain>
    </source>
</reference>
<reference key="3">
    <citation type="journal article" date="2017" name="Plant J.">
        <title>Araport11: a complete reannotation of the Arabidopsis thaliana reference genome.</title>
        <authorList>
            <person name="Cheng C.Y."/>
            <person name="Krishnakumar V."/>
            <person name="Chan A.P."/>
            <person name="Thibaud-Nissen F."/>
            <person name="Schobel S."/>
            <person name="Town C.D."/>
        </authorList>
    </citation>
    <scope>GENOME REANNOTATION</scope>
    <source>
        <strain>cv. Columbia</strain>
    </source>
</reference>
<reference key="4">
    <citation type="journal article" date="2003" name="Science">
        <title>Empirical analysis of transcriptional activity in the Arabidopsis genome.</title>
        <authorList>
            <person name="Yamada K."/>
            <person name="Lim J."/>
            <person name="Dale J.M."/>
            <person name="Chen H."/>
            <person name="Shinn P."/>
            <person name="Palm C.J."/>
            <person name="Southwick A.M."/>
            <person name="Wu H.C."/>
            <person name="Kim C.J."/>
            <person name="Nguyen M."/>
            <person name="Pham P.K."/>
            <person name="Cheuk R.F."/>
            <person name="Karlin-Newmann G."/>
            <person name="Liu S.X."/>
            <person name="Lam B."/>
            <person name="Sakano H."/>
            <person name="Wu T."/>
            <person name="Yu G."/>
            <person name="Miranda M."/>
            <person name="Quach H.L."/>
            <person name="Tripp M."/>
            <person name="Chang C.H."/>
            <person name="Lee J.M."/>
            <person name="Toriumi M.J."/>
            <person name="Chan M.M."/>
            <person name="Tang C.C."/>
            <person name="Onodera C.S."/>
            <person name="Deng J.M."/>
            <person name="Akiyama K."/>
            <person name="Ansari Y."/>
            <person name="Arakawa T."/>
            <person name="Banh J."/>
            <person name="Banno F."/>
            <person name="Bowser L."/>
            <person name="Brooks S.Y."/>
            <person name="Carninci P."/>
            <person name="Chao Q."/>
            <person name="Choy N."/>
            <person name="Enju A."/>
            <person name="Goldsmith A.D."/>
            <person name="Gurjal M."/>
            <person name="Hansen N.F."/>
            <person name="Hayashizaki Y."/>
            <person name="Johnson-Hopson C."/>
            <person name="Hsuan V.W."/>
            <person name="Iida K."/>
            <person name="Karnes M."/>
            <person name="Khan S."/>
            <person name="Koesema E."/>
            <person name="Ishida J."/>
            <person name="Jiang P.X."/>
            <person name="Jones T."/>
            <person name="Kawai J."/>
            <person name="Kamiya A."/>
            <person name="Meyers C."/>
            <person name="Nakajima M."/>
            <person name="Narusaka M."/>
            <person name="Seki M."/>
            <person name="Sakurai T."/>
            <person name="Satou M."/>
            <person name="Tamse R."/>
            <person name="Vaysberg M."/>
            <person name="Wallender E.K."/>
            <person name="Wong C."/>
            <person name="Yamamura Y."/>
            <person name="Yuan S."/>
            <person name="Shinozaki K."/>
            <person name="Davis R.W."/>
            <person name="Theologis A."/>
            <person name="Ecker J.R."/>
        </authorList>
    </citation>
    <scope>NUCLEOTIDE SEQUENCE [LARGE SCALE MRNA]</scope>
    <source>
        <strain>cv. Columbia</strain>
    </source>
</reference>
<reference key="5">
    <citation type="journal article" date="2007" name="Plant J.">
        <title>Arabidopsis thaliana plants possess a specific farnesylcysteine lyase that is involved in detoxification and recycling of farnesylcysteine.</title>
        <authorList>
            <person name="Crowell D.N."/>
            <person name="Huizinga D.H."/>
            <person name="Deem A.K."/>
            <person name="Trobaugh C."/>
            <person name="Denton R."/>
            <person name="Sen S.E."/>
        </authorList>
    </citation>
    <scope>FUNCTION</scope>
    <scope>CATALYTIC ACTIVITY</scope>
    <scope>TISSUE SPECIFICITY</scope>
</reference>
<comment type="function">
    <text evidence="4">Involved in the degradation of prenylcysteine. Cleaves specifically the thioether bond of S-farnesyl-L-cysteine and has no activity with S-geranylgeranyl-L-cysteine. Also recognizes N-acetyl-farnesylcysteine and may have a role in deprenylation of farnesylated proteins.</text>
</comment>
<comment type="catalytic activity">
    <reaction evidence="4">
        <text>S-(2E,6E)-farnesyl-L-cysteine + O2 + H2O = (2E,6E)-farnesal + L-cysteine + H2O2</text>
        <dbReference type="Rhea" id="RHEA:30231"/>
        <dbReference type="ChEBI" id="CHEBI:15377"/>
        <dbReference type="ChEBI" id="CHEBI:15379"/>
        <dbReference type="ChEBI" id="CHEBI:15894"/>
        <dbReference type="ChEBI" id="CHEBI:16240"/>
        <dbReference type="ChEBI" id="CHEBI:35235"/>
        <dbReference type="ChEBI" id="CHEBI:62141"/>
        <dbReference type="EC" id="1.8.3.6"/>
    </reaction>
</comment>
<comment type="cofactor">
    <cofactor evidence="1">
        <name>FAD</name>
        <dbReference type="ChEBI" id="CHEBI:57692"/>
    </cofactor>
</comment>
<comment type="subcellular location">
    <subcellularLocation>
        <location evidence="1">Lysosome</location>
    </subcellularLocation>
</comment>
<comment type="tissue specificity">
    <text evidence="4">Expressed in seedilings, flowers, stems, leaves and roots.</text>
</comment>
<comment type="miscellaneous">
    <text evidence="4">Plants with decreased levels of farnesylcysteine lyase exhibit delayed germination and hypersensitivity to abscisic acid.</text>
</comment>
<comment type="similarity">
    <text evidence="6">Belongs to the prenylcysteine oxidase family.</text>
</comment>
<dbReference type="EC" id="1.8.3.6" evidence="4"/>
<dbReference type="EMBL" id="AB007646">
    <property type="protein sequence ID" value="BAB11039.1"/>
    <property type="molecule type" value="Genomic_DNA"/>
</dbReference>
<dbReference type="EMBL" id="AB019227">
    <property type="protein sequence ID" value="BAB11039.1"/>
    <property type="status" value="JOINED"/>
    <property type="molecule type" value="Genomic_DNA"/>
</dbReference>
<dbReference type="EMBL" id="CP002688">
    <property type="protein sequence ID" value="AED97815.1"/>
    <property type="molecule type" value="Genomic_DNA"/>
</dbReference>
<dbReference type="EMBL" id="AY081255">
    <property type="protein sequence ID" value="AAL91144.1"/>
    <property type="molecule type" value="mRNA"/>
</dbReference>
<dbReference type="EMBL" id="AY128716">
    <property type="protein sequence ID" value="AAM91116.1"/>
    <property type="molecule type" value="mRNA"/>
</dbReference>
<dbReference type="RefSeq" id="NP_201196.1">
    <property type="nucleotide sequence ID" value="NM_125787.5"/>
</dbReference>
<dbReference type="SMR" id="P57681"/>
<dbReference type="FunCoup" id="P57681">
    <property type="interactions" value="2931"/>
</dbReference>
<dbReference type="STRING" id="3702.P57681"/>
<dbReference type="GlyCosmos" id="P57681">
    <property type="glycosylation" value="4 sites, No reported glycans"/>
</dbReference>
<dbReference type="GlyGen" id="P57681">
    <property type="glycosylation" value="4 sites"/>
</dbReference>
<dbReference type="PaxDb" id="3702-AT5G63910.1"/>
<dbReference type="ProteomicsDB" id="234821"/>
<dbReference type="EnsemblPlants" id="AT5G63910.1">
    <property type="protein sequence ID" value="AT5G63910.1"/>
    <property type="gene ID" value="AT5G63910"/>
</dbReference>
<dbReference type="GeneID" id="836512"/>
<dbReference type="Gramene" id="AT5G63910.1">
    <property type="protein sequence ID" value="AT5G63910.1"/>
    <property type="gene ID" value="AT5G63910"/>
</dbReference>
<dbReference type="KEGG" id="ath:AT5G63910"/>
<dbReference type="Araport" id="AT5G63910"/>
<dbReference type="TAIR" id="AT5G63910">
    <property type="gene designation" value="FCLY"/>
</dbReference>
<dbReference type="eggNOG" id="ENOG502QSHJ">
    <property type="taxonomic scope" value="Eukaryota"/>
</dbReference>
<dbReference type="HOGENOM" id="CLU_021176_1_0_1"/>
<dbReference type="InParanoid" id="P57681"/>
<dbReference type="OMA" id="SIGIWDG"/>
<dbReference type="PhylomeDB" id="P57681"/>
<dbReference type="BioCyc" id="ARA:AT5G63910-MONOMER"/>
<dbReference type="BioCyc" id="MetaCyc:AT5G63910-MONOMER"/>
<dbReference type="BRENDA" id="1.8.3.5">
    <property type="organism ID" value="399"/>
</dbReference>
<dbReference type="BRENDA" id="1.8.3.6">
    <property type="organism ID" value="399"/>
</dbReference>
<dbReference type="PRO" id="PR:P57681"/>
<dbReference type="Proteomes" id="UP000006548">
    <property type="component" value="Chromosome 5"/>
</dbReference>
<dbReference type="ExpressionAtlas" id="P57681">
    <property type="expression patterns" value="baseline and differential"/>
</dbReference>
<dbReference type="GO" id="GO:0005764">
    <property type="term" value="C:lysosome"/>
    <property type="evidence" value="ECO:0007669"/>
    <property type="project" value="UniProtKB-SubCell"/>
</dbReference>
<dbReference type="GO" id="GO:0000325">
    <property type="term" value="C:plant-type vacuole"/>
    <property type="evidence" value="ECO:0007005"/>
    <property type="project" value="TAIR"/>
</dbReference>
<dbReference type="GO" id="GO:0102149">
    <property type="term" value="F:farnesylcysteine lyase activity"/>
    <property type="evidence" value="ECO:0007669"/>
    <property type="project" value="UniProtKB-EC"/>
</dbReference>
<dbReference type="GO" id="GO:0001735">
    <property type="term" value="F:prenylcysteine oxidase activity"/>
    <property type="evidence" value="ECO:0000314"/>
    <property type="project" value="TAIR"/>
</dbReference>
<dbReference type="GO" id="GO:0009738">
    <property type="term" value="P:abscisic acid-activated signaling pathway"/>
    <property type="evidence" value="ECO:0000315"/>
    <property type="project" value="TAIR"/>
</dbReference>
<dbReference type="GO" id="GO:0045338">
    <property type="term" value="P:farnesyl diphosphate metabolic process"/>
    <property type="evidence" value="ECO:0000314"/>
    <property type="project" value="TAIR"/>
</dbReference>
<dbReference type="GO" id="GO:0030327">
    <property type="term" value="P:prenylated protein catabolic process"/>
    <property type="evidence" value="ECO:0000314"/>
    <property type="project" value="TAIR"/>
</dbReference>
<dbReference type="GO" id="GO:0030328">
    <property type="term" value="P:prenylcysteine catabolic process"/>
    <property type="evidence" value="ECO:0007669"/>
    <property type="project" value="InterPro"/>
</dbReference>
<dbReference type="FunFam" id="3.50.50.60:FF:000430">
    <property type="entry name" value="Farnesylcysteine lyase"/>
    <property type="match status" value="1"/>
</dbReference>
<dbReference type="Gene3D" id="3.50.50.60">
    <property type="entry name" value="FAD/NAD(P)-binding domain"/>
    <property type="match status" value="1"/>
</dbReference>
<dbReference type="InterPro" id="IPR036188">
    <property type="entry name" value="FAD/NAD-bd_sf"/>
</dbReference>
<dbReference type="InterPro" id="IPR010795">
    <property type="entry name" value="Prenylcys_lyase"/>
</dbReference>
<dbReference type="InterPro" id="IPR017046">
    <property type="entry name" value="Prenylcysteine_Oxase1"/>
</dbReference>
<dbReference type="PANTHER" id="PTHR15944">
    <property type="entry name" value="FARNESYLCYSTEINE LYASE"/>
    <property type="match status" value="1"/>
</dbReference>
<dbReference type="PANTHER" id="PTHR15944:SF0">
    <property type="entry name" value="PRENYLCYSTEINE LYASE DOMAIN-CONTAINING PROTEIN"/>
    <property type="match status" value="1"/>
</dbReference>
<dbReference type="Pfam" id="PF13450">
    <property type="entry name" value="NAD_binding_8"/>
    <property type="match status" value="1"/>
</dbReference>
<dbReference type="Pfam" id="PF07156">
    <property type="entry name" value="Prenylcys_lyase"/>
    <property type="match status" value="1"/>
</dbReference>
<dbReference type="PIRSF" id="PIRSF036292">
    <property type="entry name" value="Prenylcysteine_oxidase"/>
    <property type="match status" value="1"/>
</dbReference>
<dbReference type="SUPFAM" id="SSF51905">
    <property type="entry name" value="FAD/NAD(P)-binding domain"/>
    <property type="match status" value="1"/>
</dbReference>
<gene>
    <name evidence="5" type="primary">FCLY</name>
    <name evidence="7" type="ordered locus">At5g63910</name>
    <name evidence="8" type="ORF">MGI19.11</name>
    <name evidence="8" type="ORF">MGI19.4</name>
</gene>
<organism>
    <name type="scientific">Arabidopsis thaliana</name>
    <name type="common">Mouse-ear cress</name>
    <dbReference type="NCBI Taxonomy" id="3702"/>
    <lineage>
        <taxon>Eukaryota</taxon>
        <taxon>Viridiplantae</taxon>
        <taxon>Streptophyta</taxon>
        <taxon>Embryophyta</taxon>
        <taxon>Tracheophyta</taxon>
        <taxon>Spermatophyta</taxon>
        <taxon>Magnoliopsida</taxon>
        <taxon>eudicotyledons</taxon>
        <taxon>Gunneridae</taxon>
        <taxon>Pentapetalae</taxon>
        <taxon>rosids</taxon>
        <taxon>malvids</taxon>
        <taxon>Brassicales</taxon>
        <taxon>Brassicaceae</taxon>
        <taxon>Camelineae</taxon>
        <taxon>Arabidopsis</taxon>
    </lineage>
</organism>
<proteinExistence type="evidence at protein level"/>
<protein>
    <recommendedName>
        <fullName evidence="5">Farnesylcysteine lyase</fullName>
        <ecNumber evidence="4">1.8.3.6</ecNumber>
    </recommendedName>
</protein>
<keyword id="KW-0274">FAD</keyword>
<keyword id="KW-0285">Flavoprotein</keyword>
<keyword id="KW-0325">Glycoprotein</keyword>
<keyword id="KW-0458">Lysosome</keyword>
<keyword id="KW-0560">Oxidoreductase</keyword>
<keyword id="KW-1185">Reference proteome</keyword>
<keyword id="KW-0732">Signal</keyword>
<feature type="signal peptide" evidence="2">
    <location>
        <begin position="1"/>
        <end position="24"/>
    </location>
</feature>
<feature type="chain" id="PRO_0000023303" description="Farnesylcysteine lyase">
    <location>
        <begin position="25"/>
        <end position="500"/>
    </location>
</feature>
<feature type="glycosylation site" description="N-linked (GlcNAc...) asparagine" evidence="3">
    <location>
        <position position="56"/>
    </location>
</feature>
<feature type="glycosylation site" description="N-linked (GlcNAc...) asparagine" evidence="3">
    <location>
        <position position="113"/>
    </location>
</feature>
<feature type="glycosylation site" description="N-linked (GlcNAc...) asparagine" evidence="3">
    <location>
        <position position="211"/>
    </location>
</feature>
<feature type="glycosylation site" description="N-linked (GlcNAc...) asparagine" evidence="3">
    <location>
        <position position="281"/>
    </location>
</feature>
<sequence length="500" mass="55298">MKDFPIAISLLFALLSPVLLPCSGDSTGGVEDDSPATVCIVGSGIGGSSVAHFLRNYSVSTGLNQAKILMFERHEIVGGRMRTVTVAGDTFEAGGSILHPKNYHVKDFVERFNLTVRLPTPIEESSAIGIWDGKRFVVKTFGSGTKFPFLDTIVSWVNDLYLFLRYGLSLLRMSSFIENTVDNFLKYYESLESRPIFDNVEGMLKWSGLYNLTKLTLQEKLSEAQLSPLLVNELVTVITRINYGQSVLISGLAGAVSLAGSGGGLWSVEGGNWQMAAKLINHSDVTLHLNEKIESISYLENHYELKSTKGNSYKCDVTVVATPLDEVDIQFSPTISIPKRELQHTHTTFVRGLLNPGYFGMKSLSDVPALVGTLEDPLIPFSCISILRKYSKTDMTYKIFTRQPASDSLLDELFSRRTETVRIDWGAYPKYHAPEVFAPFILDDHHLYYVNAFENAASTMETSAVAGENIARLIISRFMTKESLSSSDKRSCSSGLHSDS</sequence>